<comment type="catalytic activity">
    <reaction evidence="1">
        <text>L-histidinol phosphate + 2-oxoglutarate = 3-(imidazol-4-yl)-2-oxopropyl phosphate + L-glutamate</text>
        <dbReference type="Rhea" id="RHEA:23744"/>
        <dbReference type="ChEBI" id="CHEBI:16810"/>
        <dbReference type="ChEBI" id="CHEBI:29985"/>
        <dbReference type="ChEBI" id="CHEBI:57766"/>
        <dbReference type="ChEBI" id="CHEBI:57980"/>
        <dbReference type="EC" id="2.6.1.9"/>
    </reaction>
</comment>
<comment type="cofactor">
    <cofactor evidence="1">
        <name>pyridoxal 5'-phosphate</name>
        <dbReference type="ChEBI" id="CHEBI:597326"/>
    </cofactor>
</comment>
<comment type="pathway">
    <text evidence="1">Amino-acid biosynthesis; L-histidine biosynthesis; L-histidine from 5-phospho-alpha-D-ribose 1-diphosphate: step 7/9.</text>
</comment>
<comment type="subunit">
    <text evidence="1">Homodimer.</text>
</comment>
<comment type="similarity">
    <text evidence="1">Belongs to the class-II pyridoxal-phosphate-dependent aminotransferase family. Histidinol-phosphate aminotransferase subfamily.</text>
</comment>
<name>HIS8_SHOC1</name>
<keyword id="KW-0028">Amino-acid biosynthesis</keyword>
<keyword id="KW-0032">Aminotransferase</keyword>
<keyword id="KW-0368">Histidine biosynthesis</keyword>
<keyword id="KW-0663">Pyridoxal phosphate</keyword>
<keyword id="KW-1185">Reference proteome</keyword>
<keyword id="KW-0808">Transferase</keyword>
<reference key="1">
    <citation type="submission" date="2003-10" db="EMBL/GenBank/DDBJ databases">
        <title>The complete genome sequence of the alkaliphilic Bacillus clausii KSM-K16.</title>
        <authorList>
            <person name="Takaki Y."/>
            <person name="Kageyama Y."/>
            <person name="Shimamura S."/>
            <person name="Suzuki H."/>
            <person name="Nishi S."/>
            <person name="Hatada Y."/>
            <person name="Kawai S."/>
            <person name="Ito S."/>
            <person name="Horikoshi K."/>
        </authorList>
    </citation>
    <scope>NUCLEOTIDE SEQUENCE [LARGE SCALE GENOMIC DNA]</scope>
    <source>
        <strain>KSM-K16</strain>
    </source>
</reference>
<accession>Q5WGR9</accession>
<organism>
    <name type="scientific">Shouchella clausii (strain KSM-K16)</name>
    <name type="common">Alkalihalobacillus clausii</name>
    <dbReference type="NCBI Taxonomy" id="66692"/>
    <lineage>
        <taxon>Bacteria</taxon>
        <taxon>Bacillati</taxon>
        <taxon>Bacillota</taxon>
        <taxon>Bacilli</taxon>
        <taxon>Bacillales</taxon>
        <taxon>Bacillaceae</taxon>
        <taxon>Shouchella</taxon>
    </lineage>
</organism>
<feature type="chain" id="PRO_0000153305" description="Histidinol-phosphate aminotransferase">
    <location>
        <begin position="1"/>
        <end position="369"/>
    </location>
</feature>
<feature type="modified residue" description="N6-(pyridoxal phosphate)lysine" evidence="1">
    <location>
        <position position="223"/>
    </location>
</feature>
<gene>
    <name evidence="1" type="primary">hisC</name>
    <name type="ordered locus">ABC1901</name>
</gene>
<protein>
    <recommendedName>
        <fullName evidence="1">Histidinol-phosphate aminotransferase</fullName>
        <ecNumber evidence="1">2.6.1.9</ecNumber>
    </recommendedName>
    <alternativeName>
        <fullName evidence="1">Imidazole acetol-phosphate transaminase</fullName>
    </alternativeName>
</protein>
<sequence length="369" mass="40055">MLAKKQIQGLPPYAPGKPIEDVKREYGLETVIKMASNENPYGASPAVAKAIADGASKTFLYPDGYGTALRKALAAKHKVDEGQLILGNGTDEVIQLLCRSFLTPETNTVMATPSFSQYKLNATIEGATIKEITVKEDGSHDLDAMLAAIDDQTRIVWVCNPNNPNGVALGEAELKTFLDAVPTTCLVVVDEAYYEYVELDDFPNSVALLNAYPQLVVLRTFSKAYGLAGLRVGYGISQREIARQIEPVRLPFNNNILAHTAALAALEDEAFIAACKQKNSVEKAKLRAFFEARGMFVFPSETNFLLVETGIPGDVVFQAFLENGFILRSGEALGYPTAIRISIGNEAENDAFIEKAPEILDQLRASLGA</sequence>
<evidence type="ECO:0000255" key="1">
    <source>
        <dbReference type="HAMAP-Rule" id="MF_01023"/>
    </source>
</evidence>
<dbReference type="EC" id="2.6.1.9" evidence="1"/>
<dbReference type="EMBL" id="AP006627">
    <property type="protein sequence ID" value="BAD64436.1"/>
    <property type="molecule type" value="Genomic_DNA"/>
</dbReference>
<dbReference type="RefSeq" id="WP_011246744.1">
    <property type="nucleotide sequence ID" value="NC_006582.1"/>
</dbReference>
<dbReference type="SMR" id="Q5WGR9"/>
<dbReference type="STRING" id="66692.ABC1901"/>
<dbReference type="KEGG" id="bcl:ABC1901"/>
<dbReference type="eggNOG" id="COG0079">
    <property type="taxonomic scope" value="Bacteria"/>
</dbReference>
<dbReference type="HOGENOM" id="CLU_017584_3_3_9"/>
<dbReference type="OrthoDB" id="9813612at2"/>
<dbReference type="UniPathway" id="UPA00031">
    <property type="reaction ID" value="UER00012"/>
</dbReference>
<dbReference type="Proteomes" id="UP000001168">
    <property type="component" value="Chromosome"/>
</dbReference>
<dbReference type="GO" id="GO:0004400">
    <property type="term" value="F:histidinol-phosphate transaminase activity"/>
    <property type="evidence" value="ECO:0007669"/>
    <property type="project" value="UniProtKB-UniRule"/>
</dbReference>
<dbReference type="GO" id="GO:0030170">
    <property type="term" value="F:pyridoxal phosphate binding"/>
    <property type="evidence" value="ECO:0007669"/>
    <property type="project" value="InterPro"/>
</dbReference>
<dbReference type="GO" id="GO:0000105">
    <property type="term" value="P:L-histidine biosynthetic process"/>
    <property type="evidence" value="ECO:0007669"/>
    <property type="project" value="UniProtKB-UniRule"/>
</dbReference>
<dbReference type="CDD" id="cd00609">
    <property type="entry name" value="AAT_like"/>
    <property type="match status" value="1"/>
</dbReference>
<dbReference type="Gene3D" id="3.90.1150.10">
    <property type="entry name" value="Aspartate Aminotransferase, domain 1"/>
    <property type="match status" value="1"/>
</dbReference>
<dbReference type="Gene3D" id="3.40.640.10">
    <property type="entry name" value="Type I PLP-dependent aspartate aminotransferase-like (Major domain)"/>
    <property type="match status" value="1"/>
</dbReference>
<dbReference type="HAMAP" id="MF_01023">
    <property type="entry name" value="HisC_aminotrans_2"/>
    <property type="match status" value="1"/>
</dbReference>
<dbReference type="InterPro" id="IPR001917">
    <property type="entry name" value="Aminotrans_II_pyridoxalP_BS"/>
</dbReference>
<dbReference type="InterPro" id="IPR004839">
    <property type="entry name" value="Aminotransferase_I/II_large"/>
</dbReference>
<dbReference type="InterPro" id="IPR005861">
    <property type="entry name" value="HisP_aminotrans"/>
</dbReference>
<dbReference type="InterPro" id="IPR050106">
    <property type="entry name" value="HistidinolP_aminotransfase"/>
</dbReference>
<dbReference type="InterPro" id="IPR015424">
    <property type="entry name" value="PyrdxlP-dep_Trfase"/>
</dbReference>
<dbReference type="InterPro" id="IPR015421">
    <property type="entry name" value="PyrdxlP-dep_Trfase_major"/>
</dbReference>
<dbReference type="InterPro" id="IPR015422">
    <property type="entry name" value="PyrdxlP-dep_Trfase_small"/>
</dbReference>
<dbReference type="NCBIfam" id="TIGR01141">
    <property type="entry name" value="hisC"/>
    <property type="match status" value="1"/>
</dbReference>
<dbReference type="PANTHER" id="PTHR43643:SF3">
    <property type="entry name" value="HISTIDINOL-PHOSPHATE AMINOTRANSFERASE"/>
    <property type="match status" value="1"/>
</dbReference>
<dbReference type="PANTHER" id="PTHR43643">
    <property type="entry name" value="HISTIDINOL-PHOSPHATE AMINOTRANSFERASE 2"/>
    <property type="match status" value="1"/>
</dbReference>
<dbReference type="Pfam" id="PF00155">
    <property type="entry name" value="Aminotran_1_2"/>
    <property type="match status" value="1"/>
</dbReference>
<dbReference type="SUPFAM" id="SSF53383">
    <property type="entry name" value="PLP-dependent transferases"/>
    <property type="match status" value="1"/>
</dbReference>
<dbReference type="PROSITE" id="PS00599">
    <property type="entry name" value="AA_TRANSFER_CLASS_2"/>
    <property type="match status" value="1"/>
</dbReference>
<proteinExistence type="inferred from homology"/>